<dbReference type="EMBL" id="X65646">
    <property type="protein sequence ID" value="CAA46598.1"/>
    <property type="molecule type" value="Genomic_DNA"/>
</dbReference>
<dbReference type="EMBL" id="AE004091">
    <property type="protein sequence ID" value="AAG07988.1"/>
    <property type="molecule type" value="Genomic_DNA"/>
</dbReference>
<dbReference type="PIR" id="B83070">
    <property type="entry name" value="B83070"/>
</dbReference>
<dbReference type="PIR" id="S21466">
    <property type="entry name" value="S21466"/>
</dbReference>
<dbReference type="RefSeq" id="NP_253290.1">
    <property type="nucleotide sequence ID" value="NC_002516.2"/>
</dbReference>
<dbReference type="RefSeq" id="WP_003094842.1">
    <property type="nucleotide sequence ID" value="NZ_QZGE01000004.1"/>
</dbReference>
<dbReference type="SMR" id="P32265"/>
<dbReference type="STRING" id="208964.PA4600"/>
<dbReference type="PaxDb" id="208964-PA4600"/>
<dbReference type="DNASU" id="881079"/>
<dbReference type="GeneID" id="881079"/>
<dbReference type="KEGG" id="pae:PA4600"/>
<dbReference type="PATRIC" id="fig|208964.12.peg.4815"/>
<dbReference type="PseudoCAP" id="PA4600"/>
<dbReference type="HOGENOM" id="CLU_069356_38_3_6"/>
<dbReference type="InParanoid" id="P32265"/>
<dbReference type="OrthoDB" id="8654052at2"/>
<dbReference type="PhylomeDB" id="P32265"/>
<dbReference type="BioCyc" id="PAER208964:G1FZ6-4694-MONOMER"/>
<dbReference type="Proteomes" id="UP000002438">
    <property type="component" value="Chromosome"/>
</dbReference>
<dbReference type="GO" id="GO:0032993">
    <property type="term" value="C:protein-DNA complex"/>
    <property type="evidence" value="ECO:0000353"/>
    <property type="project" value="CollecTF"/>
</dbReference>
<dbReference type="GO" id="GO:0003700">
    <property type="term" value="F:DNA-binding transcription factor activity"/>
    <property type="evidence" value="ECO:0000318"/>
    <property type="project" value="GO_Central"/>
</dbReference>
<dbReference type="GO" id="GO:0001217">
    <property type="term" value="F:DNA-binding transcription repressor activity"/>
    <property type="evidence" value="ECO:0000353"/>
    <property type="project" value="CollecTF"/>
</dbReference>
<dbReference type="GO" id="GO:0000976">
    <property type="term" value="F:transcription cis-regulatory region binding"/>
    <property type="evidence" value="ECO:0000314"/>
    <property type="project" value="PseudoCAP"/>
</dbReference>
<dbReference type="GO" id="GO:0045892">
    <property type="term" value="P:negative regulation of DNA-templated transcription"/>
    <property type="evidence" value="ECO:0000315"/>
    <property type="project" value="PseudoCAP"/>
</dbReference>
<dbReference type="GO" id="GO:0006355">
    <property type="term" value="P:regulation of DNA-templated transcription"/>
    <property type="evidence" value="ECO:0000318"/>
    <property type="project" value="GO_Central"/>
</dbReference>
<dbReference type="FunFam" id="1.10.357.10:FF:000022">
    <property type="entry name" value="Transcriptional regulator NfxB"/>
    <property type="match status" value="1"/>
</dbReference>
<dbReference type="Gene3D" id="1.10.357.10">
    <property type="entry name" value="Tetracycline Repressor, domain 2"/>
    <property type="match status" value="1"/>
</dbReference>
<dbReference type="InterPro" id="IPR009057">
    <property type="entry name" value="Homeodomain-like_sf"/>
</dbReference>
<dbReference type="InterPro" id="IPR050109">
    <property type="entry name" value="HTH-type_TetR-like_transc_reg"/>
</dbReference>
<dbReference type="InterPro" id="IPR036271">
    <property type="entry name" value="Tet_transcr_reg_TetR-rel_C_sf"/>
</dbReference>
<dbReference type="PANTHER" id="PTHR30055:SF234">
    <property type="entry name" value="HTH-TYPE TRANSCRIPTIONAL REGULATOR BETI"/>
    <property type="match status" value="1"/>
</dbReference>
<dbReference type="PANTHER" id="PTHR30055">
    <property type="entry name" value="HTH-TYPE TRANSCRIPTIONAL REGULATOR RUTR"/>
    <property type="match status" value="1"/>
</dbReference>
<dbReference type="SUPFAM" id="SSF46689">
    <property type="entry name" value="Homeodomain-like"/>
    <property type="match status" value="1"/>
</dbReference>
<dbReference type="SUPFAM" id="SSF48498">
    <property type="entry name" value="Tetracyclin repressor-like, C-terminal domain"/>
    <property type="match status" value="1"/>
</dbReference>
<dbReference type="PROSITE" id="PS00356">
    <property type="entry name" value="HTH_LACI_1"/>
    <property type="match status" value="1"/>
</dbReference>
<accession>P32265</accession>
<reference key="1">
    <citation type="journal article" date="1992" name="FEMS Microbiol. Lett.">
        <title>Cloning and nucleotide sequence of the Pseudomonas aeruginosa nfxB gene, conferring resistance to new quinolones.</title>
        <authorList>
            <person name="Okazaki T."/>
            <person name="Hirai K."/>
        </authorList>
    </citation>
    <scope>NUCLEOTIDE SEQUENCE [GENOMIC DNA]</scope>
    <source>
        <strain>PAO</strain>
    </source>
</reference>
<reference key="2">
    <citation type="journal article" date="2000" name="Nature">
        <title>Complete genome sequence of Pseudomonas aeruginosa PAO1, an opportunistic pathogen.</title>
        <authorList>
            <person name="Stover C.K."/>
            <person name="Pham X.-Q.T."/>
            <person name="Erwin A.L."/>
            <person name="Mizoguchi S.D."/>
            <person name="Warrener P."/>
            <person name="Hickey M.J."/>
            <person name="Brinkman F.S.L."/>
            <person name="Hufnagle W.O."/>
            <person name="Kowalik D.J."/>
            <person name="Lagrou M."/>
            <person name="Garber R.L."/>
            <person name="Goltry L."/>
            <person name="Tolentino E."/>
            <person name="Westbrock-Wadman S."/>
            <person name="Yuan Y."/>
            <person name="Brody L.L."/>
            <person name="Coulter S.N."/>
            <person name="Folger K.R."/>
            <person name="Kas A."/>
            <person name="Larbig K."/>
            <person name="Lim R.M."/>
            <person name="Smith K.A."/>
            <person name="Spencer D.H."/>
            <person name="Wong G.K.-S."/>
            <person name="Wu Z."/>
            <person name="Paulsen I.T."/>
            <person name="Reizer J."/>
            <person name="Saier M.H. Jr."/>
            <person name="Hancock R.E.W."/>
            <person name="Lory S."/>
            <person name="Olson M.V."/>
        </authorList>
    </citation>
    <scope>NUCLEOTIDE SEQUENCE [LARGE SCALE GENOMIC DNA]</scope>
    <source>
        <strain>ATCC 15692 / DSM 22644 / CIP 104116 / JCM 14847 / LMG 12228 / 1C / PRS 101 / PAO1</strain>
    </source>
</reference>
<evidence type="ECO:0000250" key="1"/>
<evidence type="ECO:0000305" key="2"/>
<protein>
    <recommendedName>
        <fullName>HTH-type transcriptional regulator NfxB</fullName>
    </recommendedName>
</protein>
<name>NFXB_PSEAE</name>
<proteinExistence type="predicted"/>
<organism>
    <name type="scientific">Pseudomonas aeruginosa (strain ATCC 15692 / DSM 22644 / CIP 104116 / JCM 14847 / LMG 12228 / 1C / PRS 101 / PAO1)</name>
    <dbReference type="NCBI Taxonomy" id="208964"/>
    <lineage>
        <taxon>Bacteria</taxon>
        <taxon>Pseudomonadati</taxon>
        <taxon>Pseudomonadota</taxon>
        <taxon>Gammaproteobacteria</taxon>
        <taxon>Pseudomonadales</taxon>
        <taxon>Pseudomonadaceae</taxon>
        <taxon>Pseudomonas</taxon>
    </lineage>
</organism>
<sequence>MTLISHDERLIKALAVAIVDRPRATLKELAEAAGVSKATLHRFCGTRDNLVQMLEDHGETVLNQIIQACDLEHAEPLEALQRLIKEHLTHRELLVFLVFQYRPDFLDPHGEGARWQSYLEALDAFFLRGQQKGVFRIDITAAVFTELFITLVYGMVDAERRGRAASSNSAHTLEQMFLHGASNPARS</sequence>
<feature type="chain" id="PRO_0000108013" description="HTH-type transcriptional regulator NfxB">
    <location>
        <begin position="1"/>
        <end position="187"/>
    </location>
</feature>
<feature type="DNA-binding region" description="H-T-H motif" evidence="1">
    <location>
        <begin position="26"/>
        <end position="45"/>
    </location>
</feature>
<feature type="sequence variant" description="In mutant nfx13E; loss of DNA binding and regulator activity.">
    <original>R</original>
    <variation>G</variation>
    <location>
        <position position="42"/>
    </location>
</feature>
<feature type="sequence conflict" description="In Ref. 1; CAA46598." evidence="2" ref="1">
    <original>A</original>
    <variation>E</variation>
    <location>
        <position position="124"/>
    </location>
</feature>
<keyword id="KW-0238">DNA-binding</keyword>
<keyword id="KW-1185">Reference proteome</keyword>
<keyword id="KW-0678">Repressor</keyword>
<keyword id="KW-0804">Transcription</keyword>
<keyword id="KW-0805">Transcription regulation</keyword>
<comment type="function">
    <text>Confers resistance to guinolones. May negatively regulate the expression of genes that are associated with cell permeability to drugs.</text>
</comment>
<gene>
    <name type="primary">nfxB</name>
    <name type="ordered locus">PA4600</name>
</gene>